<reference key="1">
    <citation type="journal article" date="2004" name="Proc. Natl. Acad. Sci. U.S.A.">
        <title>Complete genomes of two clinical Staphylococcus aureus strains: evidence for the rapid evolution of virulence and drug resistance.</title>
        <authorList>
            <person name="Holden M.T.G."/>
            <person name="Feil E.J."/>
            <person name="Lindsay J.A."/>
            <person name="Peacock S.J."/>
            <person name="Day N.P.J."/>
            <person name="Enright M.C."/>
            <person name="Foster T.J."/>
            <person name="Moore C.E."/>
            <person name="Hurst L."/>
            <person name="Atkin R."/>
            <person name="Barron A."/>
            <person name="Bason N."/>
            <person name="Bentley S.D."/>
            <person name="Chillingworth C."/>
            <person name="Chillingworth T."/>
            <person name="Churcher C."/>
            <person name="Clark L."/>
            <person name="Corton C."/>
            <person name="Cronin A."/>
            <person name="Doggett J."/>
            <person name="Dowd L."/>
            <person name="Feltwell T."/>
            <person name="Hance Z."/>
            <person name="Harris B."/>
            <person name="Hauser H."/>
            <person name="Holroyd S."/>
            <person name="Jagels K."/>
            <person name="James K.D."/>
            <person name="Lennard N."/>
            <person name="Line A."/>
            <person name="Mayes R."/>
            <person name="Moule S."/>
            <person name="Mungall K."/>
            <person name="Ormond D."/>
            <person name="Quail M.A."/>
            <person name="Rabbinowitsch E."/>
            <person name="Rutherford K.M."/>
            <person name="Sanders M."/>
            <person name="Sharp S."/>
            <person name="Simmonds M."/>
            <person name="Stevens K."/>
            <person name="Whitehead S."/>
            <person name="Barrell B.G."/>
            <person name="Spratt B.G."/>
            <person name="Parkhill J."/>
        </authorList>
    </citation>
    <scope>NUCLEOTIDE SEQUENCE [LARGE SCALE GENOMIC DNA]</scope>
    <source>
        <strain>MSSA476</strain>
    </source>
</reference>
<comment type="function">
    <text evidence="1">Part of the ABC transporter complex PotABCD involved in spermidine/putrescine import. Responsible for energy coupling to the transport system.</text>
</comment>
<comment type="catalytic activity">
    <reaction evidence="1">
        <text>ATP + H2O + polyamine-[polyamine-binding protein]Side 1 = ADP + phosphate + polyamineSide 2 + [polyamine-binding protein]Side 1.</text>
        <dbReference type="EC" id="7.6.2.11"/>
    </reaction>
</comment>
<comment type="subunit">
    <text evidence="1">The complex is composed of two ATP-binding proteins (PotA), two transmembrane proteins (PotB and PotC) and a solute-binding protein (PotD).</text>
</comment>
<comment type="subcellular location">
    <subcellularLocation>
        <location evidence="1">Cell membrane</location>
        <topology evidence="1">Peripheral membrane protein</topology>
    </subcellularLocation>
</comment>
<comment type="similarity">
    <text evidence="1">Belongs to the ABC transporter superfamily. Spermidine/putrescine importer (TC 3.A.1.11.1) family.</text>
</comment>
<protein>
    <recommendedName>
        <fullName evidence="1">Spermidine/putrescine import ATP-binding protein PotA</fullName>
        <ecNumber evidence="1">7.6.2.11</ecNumber>
    </recommendedName>
</protein>
<feature type="chain" id="PRO_0000092758" description="Spermidine/putrescine import ATP-binding protein PotA">
    <location>
        <begin position="1"/>
        <end position="364"/>
    </location>
</feature>
<feature type="domain" description="ABC transporter" evidence="1">
    <location>
        <begin position="5"/>
        <end position="235"/>
    </location>
</feature>
<feature type="binding site" evidence="1">
    <location>
        <begin position="37"/>
        <end position="44"/>
    </location>
    <ligand>
        <name>ATP</name>
        <dbReference type="ChEBI" id="CHEBI:30616"/>
    </ligand>
</feature>
<sequence length="364" mass="41330">MEPLLSLKSVSKSYDDLNILDDIDIDIESGYFYTLLGPSGCGKTTILKLIAGFEYPDSGEVIYQNKPIGNLPPNKRKVNTVFQDYALFPHLNVYDNIAFGLKLKKLSKTEIDQKVTEALKLVKLSGYEKRNINEMSGGQKQRVAIARAIVNEPEILLLDESLSALDLKLRTEMQYELRELQSRLGITFIFVTHDQEEALALSDFLFVLKDGKIQQFGTPTDIYDEPVNRFVADFIGESNIVEGRMVRDYVVNIYGQDFECVDMGIPENKKVEVVIRPEDISLIKAEEGLFKATVDSMLFRGVHYEICCIDNKGYEWVIQTTKKAEVGSEVGLYFDPEAIHIMVPGETEEEFDKRIESYEEVDNA</sequence>
<gene>
    <name evidence="1" type="primary">potA</name>
    <name type="ordered locus">SAS1034</name>
</gene>
<organism>
    <name type="scientific">Staphylococcus aureus (strain MSSA476)</name>
    <dbReference type="NCBI Taxonomy" id="282459"/>
    <lineage>
        <taxon>Bacteria</taxon>
        <taxon>Bacillati</taxon>
        <taxon>Bacillota</taxon>
        <taxon>Bacilli</taxon>
        <taxon>Bacillales</taxon>
        <taxon>Staphylococcaceae</taxon>
        <taxon>Staphylococcus</taxon>
    </lineage>
</organism>
<evidence type="ECO:0000255" key="1">
    <source>
        <dbReference type="HAMAP-Rule" id="MF_01726"/>
    </source>
</evidence>
<name>POTA_STAAS</name>
<keyword id="KW-0067">ATP-binding</keyword>
<keyword id="KW-1003">Cell membrane</keyword>
<keyword id="KW-0472">Membrane</keyword>
<keyword id="KW-0547">Nucleotide-binding</keyword>
<keyword id="KW-1278">Translocase</keyword>
<keyword id="KW-0813">Transport</keyword>
<proteinExistence type="inferred from homology"/>
<dbReference type="EC" id="7.6.2.11" evidence="1"/>
<dbReference type="EMBL" id="BX571857">
    <property type="protein sequence ID" value="CAG42808.1"/>
    <property type="molecule type" value="Genomic_DNA"/>
</dbReference>
<dbReference type="RefSeq" id="WP_000433551.1">
    <property type="nucleotide sequence ID" value="NC_002953.3"/>
</dbReference>
<dbReference type="SMR" id="Q6GAB5"/>
<dbReference type="KEGG" id="sas:SAS1034"/>
<dbReference type="HOGENOM" id="CLU_000604_1_1_9"/>
<dbReference type="GO" id="GO:0043190">
    <property type="term" value="C:ATP-binding cassette (ABC) transporter complex"/>
    <property type="evidence" value="ECO:0007669"/>
    <property type="project" value="InterPro"/>
</dbReference>
<dbReference type="GO" id="GO:0015417">
    <property type="term" value="F:ABC-type polyamine transporter activity"/>
    <property type="evidence" value="ECO:0007669"/>
    <property type="project" value="UniProtKB-EC"/>
</dbReference>
<dbReference type="GO" id="GO:0005524">
    <property type="term" value="F:ATP binding"/>
    <property type="evidence" value="ECO:0007669"/>
    <property type="project" value="UniProtKB-KW"/>
</dbReference>
<dbReference type="GO" id="GO:0016887">
    <property type="term" value="F:ATP hydrolysis activity"/>
    <property type="evidence" value="ECO:0007669"/>
    <property type="project" value="InterPro"/>
</dbReference>
<dbReference type="FunFam" id="3.40.50.300:FF:000133">
    <property type="entry name" value="Spermidine/putrescine import ATP-binding protein PotA"/>
    <property type="match status" value="1"/>
</dbReference>
<dbReference type="Gene3D" id="2.40.50.100">
    <property type="match status" value="1"/>
</dbReference>
<dbReference type="Gene3D" id="3.40.50.300">
    <property type="entry name" value="P-loop containing nucleotide triphosphate hydrolases"/>
    <property type="match status" value="1"/>
</dbReference>
<dbReference type="InterPro" id="IPR003593">
    <property type="entry name" value="AAA+_ATPase"/>
</dbReference>
<dbReference type="InterPro" id="IPR050093">
    <property type="entry name" value="ABC_SmlMolc_Importer"/>
</dbReference>
<dbReference type="InterPro" id="IPR003439">
    <property type="entry name" value="ABC_transporter-like_ATP-bd"/>
</dbReference>
<dbReference type="InterPro" id="IPR017871">
    <property type="entry name" value="ABC_transporter-like_CS"/>
</dbReference>
<dbReference type="InterPro" id="IPR008995">
    <property type="entry name" value="Mo/tungstate-bd_C_term_dom"/>
</dbReference>
<dbReference type="InterPro" id="IPR027417">
    <property type="entry name" value="P-loop_NTPase"/>
</dbReference>
<dbReference type="InterPro" id="IPR013611">
    <property type="entry name" value="Transp-assoc_OB_typ2"/>
</dbReference>
<dbReference type="PANTHER" id="PTHR42781">
    <property type="entry name" value="SPERMIDINE/PUTRESCINE IMPORT ATP-BINDING PROTEIN POTA"/>
    <property type="match status" value="1"/>
</dbReference>
<dbReference type="PANTHER" id="PTHR42781:SF4">
    <property type="entry name" value="SPERMIDINE_PUTRESCINE IMPORT ATP-BINDING PROTEIN POTA"/>
    <property type="match status" value="1"/>
</dbReference>
<dbReference type="Pfam" id="PF00005">
    <property type="entry name" value="ABC_tran"/>
    <property type="match status" value="1"/>
</dbReference>
<dbReference type="Pfam" id="PF08402">
    <property type="entry name" value="TOBE_2"/>
    <property type="match status" value="1"/>
</dbReference>
<dbReference type="SMART" id="SM00382">
    <property type="entry name" value="AAA"/>
    <property type="match status" value="1"/>
</dbReference>
<dbReference type="SUPFAM" id="SSF50331">
    <property type="entry name" value="MOP-like"/>
    <property type="match status" value="1"/>
</dbReference>
<dbReference type="SUPFAM" id="SSF52540">
    <property type="entry name" value="P-loop containing nucleoside triphosphate hydrolases"/>
    <property type="match status" value="1"/>
</dbReference>
<dbReference type="PROSITE" id="PS00211">
    <property type="entry name" value="ABC_TRANSPORTER_1"/>
    <property type="match status" value="1"/>
</dbReference>
<dbReference type="PROSITE" id="PS50893">
    <property type="entry name" value="ABC_TRANSPORTER_2"/>
    <property type="match status" value="1"/>
</dbReference>
<dbReference type="PROSITE" id="PS51305">
    <property type="entry name" value="POTA"/>
    <property type="match status" value="1"/>
</dbReference>
<accession>Q6GAB5</accession>